<proteinExistence type="inferred from homology"/>
<sequence length="278" mass="31065">MDVRQSIHSAHAKTLDTQGLRNEFLVEEVFVADEYTMVYSHIDRIIVGGIMPITKTVSVGGEVGKQLGVSHFLERRELGVINIGGAGTITVDGQCYEIGHRDALYVGKGAKEVVFASIDTATPAKFYYNCAPAHTTYPTKKVTPDEVSPVTLGDNLTSNRRTINKYFVPDVLETCQLSMGLTELAPGNLWNTMPCHTHERRMEVYFYFNMDDDACVFHMMGQPQETRHIVMHNEQAVISPSWSIHSGVGTKAYTFIWGMVGENQVFDDMDHVAVKDLR</sequence>
<protein>
    <recommendedName>
        <fullName evidence="1">4-deoxy-L-threo-5-hexosulose-uronate ketol-isomerase</fullName>
        <ecNumber evidence="1">5.3.1.17</ecNumber>
    </recommendedName>
    <alternativeName>
        <fullName evidence="1">5-keto-4-deoxyuronate isomerase</fullName>
    </alternativeName>
    <alternativeName>
        <fullName evidence="1">DKI isomerase</fullName>
    </alternativeName>
</protein>
<evidence type="ECO:0000255" key="1">
    <source>
        <dbReference type="HAMAP-Rule" id="MF_00687"/>
    </source>
</evidence>
<comment type="function">
    <text evidence="1">Catalyzes the isomerization of 5-dehydro-4-deoxy-D-glucuronate to 3-deoxy-D-glycero-2,5-hexodiulosonate.</text>
</comment>
<comment type="catalytic activity">
    <reaction evidence="1">
        <text>5-dehydro-4-deoxy-D-glucuronate = 3-deoxy-D-glycero-2,5-hexodiulosonate</text>
        <dbReference type="Rhea" id="RHEA:23896"/>
        <dbReference type="ChEBI" id="CHEBI:17117"/>
        <dbReference type="ChEBI" id="CHEBI:29071"/>
        <dbReference type="EC" id="5.3.1.17"/>
    </reaction>
</comment>
<comment type="cofactor">
    <cofactor evidence="1">
        <name>Zn(2+)</name>
        <dbReference type="ChEBI" id="CHEBI:29105"/>
    </cofactor>
    <text evidence="1">Binds 1 zinc ion per subunit.</text>
</comment>
<comment type="pathway">
    <text evidence="1">Glycan metabolism; pectin degradation; 2-dehydro-3-deoxy-D-gluconate from pectin: step 4/5.</text>
</comment>
<comment type="subunit">
    <text evidence="1">Homohexamer.</text>
</comment>
<comment type="similarity">
    <text evidence="1">Belongs to the KduI family.</text>
</comment>
<gene>
    <name evidence="1" type="primary">kduI</name>
    <name type="ordered locus">ECIAI1_2953</name>
</gene>
<accession>B7LY99</accession>
<dbReference type="EC" id="5.3.1.17" evidence="1"/>
<dbReference type="EMBL" id="CU928160">
    <property type="protein sequence ID" value="CAQ99769.1"/>
    <property type="molecule type" value="Genomic_DNA"/>
</dbReference>
<dbReference type="RefSeq" id="WP_000383220.1">
    <property type="nucleotide sequence ID" value="NC_011741.1"/>
</dbReference>
<dbReference type="SMR" id="B7LY99"/>
<dbReference type="KEGG" id="ecr:ECIAI1_2953"/>
<dbReference type="HOGENOM" id="CLU_062609_0_0_6"/>
<dbReference type="UniPathway" id="UPA00545">
    <property type="reaction ID" value="UER00826"/>
</dbReference>
<dbReference type="GO" id="GO:0008697">
    <property type="term" value="F:4-deoxy-L-threo-5-hexosulose-uronate ketol-isomerase activity"/>
    <property type="evidence" value="ECO:0007669"/>
    <property type="project" value="UniProtKB-UniRule"/>
</dbReference>
<dbReference type="GO" id="GO:0008270">
    <property type="term" value="F:zinc ion binding"/>
    <property type="evidence" value="ECO:0007669"/>
    <property type="project" value="UniProtKB-UniRule"/>
</dbReference>
<dbReference type="GO" id="GO:0019698">
    <property type="term" value="P:D-galacturonate catabolic process"/>
    <property type="evidence" value="ECO:0007669"/>
    <property type="project" value="TreeGrafter"/>
</dbReference>
<dbReference type="GO" id="GO:0042840">
    <property type="term" value="P:D-glucuronate catabolic process"/>
    <property type="evidence" value="ECO:0007669"/>
    <property type="project" value="TreeGrafter"/>
</dbReference>
<dbReference type="GO" id="GO:0045490">
    <property type="term" value="P:pectin catabolic process"/>
    <property type="evidence" value="ECO:0007669"/>
    <property type="project" value="UniProtKB-UniRule"/>
</dbReference>
<dbReference type="CDD" id="cd20491">
    <property type="entry name" value="cupin_KduI_C"/>
    <property type="match status" value="1"/>
</dbReference>
<dbReference type="CDD" id="cd20294">
    <property type="entry name" value="cupin_KduI_N"/>
    <property type="match status" value="1"/>
</dbReference>
<dbReference type="FunFam" id="2.60.120.10:FF:000018">
    <property type="entry name" value="4-deoxy-L-threo-5-hexosulose-uronate ketol-isomerase"/>
    <property type="match status" value="1"/>
</dbReference>
<dbReference type="FunFam" id="2.60.120.520:FF:000001">
    <property type="entry name" value="4-deoxy-L-threo-5-hexosulose-uronate ketol-isomerase"/>
    <property type="match status" value="1"/>
</dbReference>
<dbReference type="Gene3D" id="2.60.120.10">
    <property type="entry name" value="Jelly Rolls"/>
    <property type="match status" value="1"/>
</dbReference>
<dbReference type="Gene3D" id="2.60.120.520">
    <property type="entry name" value="pectin degrading enzyme 5-keto 4- deoxyuronate isomerase, domain 1"/>
    <property type="match status" value="1"/>
</dbReference>
<dbReference type="HAMAP" id="MF_00687">
    <property type="entry name" value="KduI"/>
    <property type="match status" value="1"/>
</dbReference>
<dbReference type="InterPro" id="IPR007045">
    <property type="entry name" value="KduI"/>
</dbReference>
<dbReference type="InterPro" id="IPR021120">
    <property type="entry name" value="KduI/IolB_isomerase"/>
</dbReference>
<dbReference type="InterPro" id="IPR027449">
    <property type="entry name" value="KduI_N"/>
</dbReference>
<dbReference type="InterPro" id="IPR014710">
    <property type="entry name" value="RmlC-like_jellyroll"/>
</dbReference>
<dbReference type="InterPro" id="IPR011051">
    <property type="entry name" value="RmlC_Cupin_sf"/>
</dbReference>
<dbReference type="NCBIfam" id="NF002091">
    <property type="entry name" value="PRK00924.1"/>
    <property type="match status" value="1"/>
</dbReference>
<dbReference type="PANTHER" id="PTHR38461">
    <property type="entry name" value="4-DEOXY-L-THREO-5-HEXOSULOSE-URONATE KETOL-ISOMERASE"/>
    <property type="match status" value="1"/>
</dbReference>
<dbReference type="PANTHER" id="PTHR38461:SF1">
    <property type="entry name" value="4-DEOXY-L-THREO-5-HEXOSULOSE-URONATE KETOL-ISOMERASE"/>
    <property type="match status" value="1"/>
</dbReference>
<dbReference type="Pfam" id="PF04962">
    <property type="entry name" value="KduI"/>
    <property type="match status" value="1"/>
</dbReference>
<dbReference type="PIRSF" id="PIRSF006625">
    <property type="entry name" value="KduI"/>
    <property type="match status" value="1"/>
</dbReference>
<dbReference type="SUPFAM" id="SSF51182">
    <property type="entry name" value="RmlC-like cupins"/>
    <property type="match status" value="1"/>
</dbReference>
<name>KDUI_ECO8A</name>
<keyword id="KW-0413">Isomerase</keyword>
<keyword id="KW-0479">Metal-binding</keyword>
<keyword id="KW-0862">Zinc</keyword>
<feature type="chain" id="PRO_1000131881" description="4-deoxy-L-threo-5-hexosulose-uronate ketol-isomerase">
    <location>
        <begin position="1"/>
        <end position="278"/>
    </location>
</feature>
<feature type="binding site" evidence="1">
    <location>
        <position position="196"/>
    </location>
    <ligand>
        <name>Zn(2+)</name>
        <dbReference type="ChEBI" id="CHEBI:29105"/>
    </ligand>
</feature>
<feature type="binding site" evidence="1">
    <location>
        <position position="198"/>
    </location>
    <ligand>
        <name>Zn(2+)</name>
        <dbReference type="ChEBI" id="CHEBI:29105"/>
    </ligand>
</feature>
<feature type="binding site" evidence="1">
    <location>
        <position position="203"/>
    </location>
    <ligand>
        <name>Zn(2+)</name>
        <dbReference type="ChEBI" id="CHEBI:29105"/>
    </ligand>
</feature>
<feature type="binding site" evidence="1">
    <location>
        <position position="245"/>
    </location>
    <ligand>
        <name>Zn(2+)</name>
        <dbReference type="ChEBI" id="CHEBI:29105"/>
    </ligand>
</feature>
<organism>
    <name type="scientific">Escherichia coli O8 (strain IAI1)</name>
    <dbReference type="NCBI Taxonomy" id="585034"/>
    <lineage>
        <taxon>Bacteria</taxon>
        <taxon>Pseudomonadati</taxon>
        <taxon>Pseudomonadota</taxon>
        <taxon>Gammaproteobacteria</taxon>
        <taxon>Enterobacterales</taxon>
        <taxon>Enterobacteriaceae</taxon>
        <taxon>Escherichia</taxon>
    </lineage>
</organism>
<reference key="1">
    <citation type="journal article" date="2009" name="PLoS Genet.">
        <title>Organised genome dynamics in the Escherichia coli species results in highly diverse adaptive paths.</title>
        <authorList>
            <person name="Touchon M."/>
            <person name="Hoede C."/>
            <person name="Tenaillon O."/>
            <person name="Barbe V."/>
            <person name="Baeriswyl S."/>
            <person name="Bidet P."/>
            <person name="Bingen E."/>
            <person name="Bonacorsi S."/>
            <person name="Bouchier C."/>
            <person name="Bouvet O."/>
            <person name="Calteau A."/>
            <person name="Chiapello H."/>
            <person name="Clermont O."/>
            <person name="Cruveiller S."/>
            <person name="Danchin A."/>
            <person name="Diard M."/>
            <person name="Dossat C."/>
            <person name="Karoui M.E."/>
            <person name="Frapy E."/>
            <person name="Garry L."/>
            <person name="Ghigo J.M."/>
            <person name="Gilles A.M."/>
            <person name="Johnson J."/>
            <person name="Le Bouguenec C."/>
            <person name="Lescat M."/>
            <person name="Mangenot S."/>
            <person name="Martinez-Jehanne V."/>
            <person name="Matic I."/>
            <person name="Nassif X."/>
            <person name="Oztas S."/>
            <person name="Petit M.A."/>
            <person name="Pichon C."/>
            <person name="Rouy Z."/>
            <person name="Ruf C.S."/>
            <person name="Schneider D."/>
            <person name="Tourret J."/>
            <person name="Vacherie B."/>
            <person name="Vallenet D."/>
            <person name="Medigue C."/>
            <person name="Rocha E.P.C."/>
            <person name="Denamur E."/>
        </authorList>
    </citation>
    <scope>NUCLEOTIDE SEQUENCE [LARGE SCALE GENOMIC DNA]</scope>
    <source>
        <strain>IAI1</strain>
    </source>
</reference>